<organism>
    <name type="scientific">Staphylococcus epidermidis (strain ATCC 35984 / DSM 28319 / BCRC 17069 / CCUG 31568 / BM 3577 / RP62A)</name>
    <dbReference type="NCBI Taxonomy" id="176279"/>
    <lineage>
        <taxon>Bacteria</taxon>
        <taxon>Bacillati</taxon>
        <taxon>Bacillota</taxon>
        <taxon>Bacilli</taxon>
        <taxon>Bacillales</taxon>
        <taxon>Staphylococcaceae</taxon>
        <taxon>Staphylococcus</taxon>
    </lineage>
</organism>
<gene>
    <name type="ordered locus">SERP1888</name>
</gene>
<dbReference type="EC" id="1.1.1.-"/>
<dbReference type="EMBL" id="CP000029">
    <property type="protein sequence ID" value="AAW55277.1"/>
    <property type="molecule type" value="Genomic_DNA"/>
</dbReference>
<dbReference type="RefSeq" id="WP_001832639.1">
    <property type="nucleotide sequence ID" value="NC_002976.3"/>
</dbReference>
<dbReference type="SMR" id="Q5HLU4"/>
<dbReference type="STRING" id="176279.SERP1888"/>
<dbReference type="KEGG" id="ser:SERP1888"/>
<dbReference type="eggNOG" id="COG1052">
    <property type="taxonomic scope" value="Bacteria"/>
</dbReference>
<dbReference type="HOGENOM" id="CLU_019796_1_2_9"/>
<dbReference type="Proteomes" id="UP000000531">
    <property type="component" value="Chromosome"/>
</dbReference>
<dbReference type="GO" id="GO:0051287">
    <property type="term" value="F:NAD binding"/>
    <property type="evidence" value="ECO:0007669"/>
    <property type="project" value="InterPro"/>
</dbReference>
<dbReference type="GO" id="GO:0016616">
    <property type="term" value="F:oxidoreductase activity, acting on the CH-OH group of donors, NAD or NADP as acceptor"/>
    <property type="evidence" value="ECO:0007669"/>
    <property type="project" value="InterPro"/>
</dbReference>
<dbReference type="CDD" id="cd12178">
    <property type="entry name" value="2-Hacid_dh_13"/>
    <property type="match status" value="1"/>
</dbReference>
<dbReference type="FunFam" id="3.40.50.720:FF:000462">
    <property type="entry name" value="Glyoxylate reductase (NADP+)"/>
    <property type="match status" value="1"/>
</dbReference>
<dbReference type="Gene3D" id="3.40.50.720">
    <property type="entry name" value="NAD(P)-binding Rossmann-like Domain"/>
    <property type="match status" value="2"/>
</dbReference>
<dbReference type="InterPro" id="IPR050857">
    <property type="entry name" value="D-2-hydroxyacid_DH"/>
</dbReference>
<dbReference type="InterPro" id="IPR006139">
    <property type="entry name" value="D-isomer_2_OHA_DH_cat_dom"/>
</dbReference>
<dbReference type="InterPro" id="IPR029753">
    <property type="entry name" value="D-isomer_DH_CS"/>
</dbReference>
<dbReference type="InterPro" id="IPR006140">
    <property type="entry name" value="D-isomer_DH_NAD-bd"/>
</dbReference>
<dbReference type="InterPro" id="IPR036291">
    <property type="entry name" value="NAD(P)-bd_dom_sf"/>
</dbReference>
<dbReference type="PANTHER" id="PTHR42789">
    <property type="entry name" value="D-ISOMER SPECIFIC 2-HYDROXYACID DEHYDROGENASE FAMILY PROTEIN (AFU_ORTHOLOGUE AFUA_6G10090)"/>
    <property type="match status" value="1"/>
</dbReference>
<dbReference type="PANTHER" id="PTHR42789:SF1">
    <property type="entry name" value="D-ISOMER SPECIFIC 2-HYDROXYACID DEHYDROGENASE FAMILY PROTEIN (AFU_ORTHOLOGUE AFUA_6G10090)"/>
    <property type="match status" value="1"/>
</dbReference>
<dbReference type="Pfam" id="PF00389">
    <property type="entry name" value="2-Hacid_dh"/>
    <property type="match status" value="1"/>
</dbReference>
<dbReference type="Pfam" id="PF02826">
    <property type="entry name" value="2-Hacid_dh_C"/>
    <property type="match status" value="1"/>
</dbReference>
<dbReference type="SUPFAM" id="SSF52283">
    <property type="entry name" value="Formate/glycerate dehydrogenase catalytic domain-like"/>
    <property type="match status" value="1"/>
</dbReference>
<dbReference type="SUPFAM" id="SSF51735">
    <property type="entry name" value="NAD(P)-binding Rossmann-fold domains"/>
    <property type="match status" value="1"/>
</dbReference>
<dbReference type="PROSITE" id="PS00671">
    <property type="entry name" value="D_2_HYDROXYACID_DH_3"/>
    <property type="match status" value="1"/>
</dbReference>
<reference key="1">
    <citation type="journal article" date="2005" name="J. Bacteriol.">
        <title>Insights on evolution of virulence and resistance from the complete genome analysis of an early methicillin-resistant Staphylococcus aureus strain and a biofilm-producing methicillin-resistant Staphylococcus epidermidis strain.</title>
        <authorList>
            <person name="Gill S.R."/>
            <person name="Fouts D.E."/>
            <person name="Archer G.L."/>
            <person name="Mongodin E.F."/>
            <person name="DeBoy R.T."/>
            <person name="Ravel J."/>
            <person name="Paulsen I.T."/>
            <person name="Kolonay J.F."/>
            <person name="Brinkac L.M."/>
            <person name="Beanan M.J."/>
            <person name="Dodson R.J."/>
            <person name="Daugherty S.C."/>
            <person name="Madupu R."/>
            <person name="Angiuoli S.V."/>
            <person name="Durkin A.S."/>
            <person name="Haft D.H."/>
            <person name="Vamathevan J.J."/>
            <person name="Khouri H."/>
            <person name="Utterback T.R."/>
            <person name="Lee C."/>
            <person name="Dimitrov G."/>
            <person name="Jiang L."/>
            <person name="Qin H."/>
            <person name="Weidman J."/>
            <person name="Tran K."/>
            <person name="Kang K.H."/>
            <person name="Hance I.R."/>
            <person name="Nelson K.E."/>
            <person name="Fraser C.M."/>
        </authorList>
    </citation>
    <scope>NUCLEOTIDE SEQUENCE [LARGE SCALE GENOMIC DNA]</scope>
    <source>
        <strain>ATCC 35984 / DSM 28319 / BCRC 17069 / CCUG 31568 / BM 3577 / RP62A</strain>
    </source>
</reference>
<keyword id="KW-0520">NAD</keyword>
<keyword id="KW-0560">Oxidoreductase</keyword>
<keyword id="KW-1185">Reference proteome</keyword>
<name>Y1888_STAEQ</name>
<sequence>MTKVYIAGAIPEVGLNLLKEHFEVDMYDGEGLIDKETLKKGVEHADALISLLSTSVDKDIIDSANNLKIIANYGAGFNNIDVEYARQQNIDVTNTPHASTNATADLTIGLILSVARRIVEGDHLSRTTGFDGWAPLFFRGREVSGKTIGIIGLGEIGGAVAKRARAFDMDVLYTGPHRKEEKERDIGAKYVDLDTLLKNADFITINAAYNPSLHHMIDTEQFNKMKSTAYLINAGRGPIVNEQSLVEALDNKAIEGAALDVYEFEPEITDALKSFKNVVLTPHIGNATFEARDMMAKIVANDTIKKLNGDEPQFIVN</sequence>
<protein>
    <recommendedName>
        <fullName>Putative 2-hydroxyacid dehydrogenase SERP1888</fullName>
        <ecNumber>1.1.1.-</ecNumber>
    </recommendedName>
</protein>
<proteinExistence type="inferred from homology"/>
<feature type="chain" id="PRO_0000312189" description="Putative 2-hydroxyacid dehydrogenase SERP1888">
    <location>
        <begin position="1"/>
        <end position="317"/>
    </location>
</feature>
<feature type="active site" evidence="1">
    <location>
        <position position="236"/>
    </location>
</feature>
<feature type="active site" evidence="1">
    <location>
        <position position="265"/>
    </location>
</feature>
<feature type="active site" description="Proton donor" evidence="1">
    <location>
        <position position="283"/>
    </location>
</feature>
<feature type="binding site" evidence="1">
    <location>
        <begin position="155"/>
        <end position="156"/>
    </location>
    <ligand>
        <name>NAD(+)</name>
        <dbReference type="ChEBI" id="CHEBI:57540"/>
    </ligand>
</feature>
<feature type="binding site" evidence="1">
    <location>
        <begin position="234"/>
        <end position="236"/>
    </location>
    <ligand>
        <name>NAD(+)</name>
        <dbReference type="ChEBI" id="CHEBI:57540"/>
    </ligand>
</feature>
<feature type="binding site" evidence="1">
    <location>
        <position position="260"/>
    </location>
    <ligand>
        <name>NAD(+)</name>
        <dbReference type="ChEBI" id="CHEBI:57540"/>
    </ligand>
</feature>
<feature type="binding site" evidence="1">
    <location>
        <begin position="283"/>
        <end position="286"/>
    </location>
    <ligand>
        <name>NAD(+)</name>
        <dbReference type="ChEBI" id="CHEBI:57540"/>
    </ligand>
</feature>
<accession>Q5HLU4</accession>
<comment type="similarity">
    <text evidence="2">Belongs to the D-isomer specific 2-hydroxyacid dehydrogenase family.</text>
</comment>
<evidence type="ECO:0000250" key="1"/>
<evidence type="ECO:0000305" key="2"/>